<gene>
    <name evidence="1" type="primary">nadA</name>
    <name type="ordered locus">YPK_2953</name>
</gene>
<evidence type="ECO:0000255" key="1">
    <source>
        <dbReference type="HAMAP-Rule" id="MF_00567"/>
    </source>
</evidence>
<proteinExistence type="inferred from homology"/>
<comment type="function">
    <text evidence="1">Catalyzes the condensation of iminoaspartate with dihydroxyacetone phosphate to form quinolinate.</text>
</comment>
<comment type="catalytic activity">
    <reaction evidence="1">
        <text>iminosuccinate + dihydroxyacetone phosphate = quinolinate + phosphate + 2 H2O + H(+)</text>
        <dbReference type="Rhea" id="RHEA:25888"/>
        <dbReference type="ChEBI" id="CHEBI:15377"/>
        <dbReference type="ChEBI" id="CHEBI:15378"/>
        <dbReference type="ChEBI" id="CHEBI:29959"/>
        <dbReference type="ChEBI" id="CHEBI:43474"/>
        <dbReference type="ChEBI" id="CHEBI:57642"/>
        <dbReference type="ChEBI" id="CHEBI:77875"/>
        <dbReference type="EC" id="2.5.1.72"/>
    </reaction>
    <physiologicalReaction direction="left-to-right" evidence="1">
        <dbReference type="Rhea" id="RHEA:25889"/>
    </physiologicalReaction>
</comment>
<comment type="cofactor">
    <cofactor evidence="1">
        <name>[4Fe-4S] cluster</name>
        <dbReference type="ChEBI" id="CHEBI:49883"/>
    </cofactor>
    <text evidence="1">Binds 1 [4Fe-4S] cluster per subunit.</text>
</comment>
<comment type="pathway">
    <text evidence="1">Cofactor biosynthesis; NAD(+) biosynthesis; quinolinate from iminoaspartate: step 1/1.</text>
</comment>
<comment type="subcellular location">
    <subcellularLocation>
        <location evidence="1">Cytoplasm</location>
    </subcellularLocation>
</comment>
<comment type="similarity">
    <text evidence="1">Belongs to the quinolinate synthase family. Type 1 subfamily.</text>
</comment>
<keyword id="KW-0004">4Fe-4S</keyword>
<keyword id="KW-0963">Cytoplasm</keyword>
<keyword id="KW-0408">Iron</keyword>
<keyword id="KW-0411">Iron-sulfur</keyword>
<keyword id="KW-0479">Metal-binding</keyword>
<keyword id="KW-0662">Pyridine nucleotide biosynthesis</keyword>
<keyword id="KW-0808">Transferase</keyword>
<accession>B1JSU6</accession>
<organism>
    <name type="scientific">Yersinia pseudotuberculosis serotype O:3 (strain YPIII)</name>
    <dbReference type="NCBI Taxonomy" id="502800"/>
    <lineage>
        <taxon>Bacteria</taxon>
        <taxon>Pseudomonadati</taxon>
        <taxon>Pseudomonadota</taxon>
        <taxon>Gammaproteobacteria</taxon>
        <taxon>Enterobacterales</taxon>
        <taxon>Yersiniaceae</taxon>
        <taxon>Yersinia</taxon>
    </lineage>
</organism>
<name>NADA_YERPY</name>
<protein>
    <recommendedName>
        <fullName evidence="1">Quinolinate synthase</fullName>
        <ecNumber evidence="1">2.5.1.72</ecNumber>
    </recommendedName>
</protein>
<feature type="chain" id="PRO_1000129432" description="Quinolinate synthase">
    <location>
        <begin position="1"/>
        <end position="353"/>
    </location>
</feature>
<feature type="binding site" evidence="1">
    <location>
        <position position="47"/>
    </location>
    <ligand>
        <name>iminosuccinate</name>
        <dbReference type="ChEBI" id="CHEBI:77875"/>
    </ligand>
</feature>
<feature type="binding site" evidence="1">
    <location>
        <position position="68"/>
    </location>
    <ligand>
        <name>iminosuccinate</name>
        <dbReference type="ChEBI" id="CHEBI:77875"/>
    </ligand>
</feature>
<feature type="binding site" evidence="1">
    <location>
        <position position="113"/>
    </location>
    <ligand>
        <name>[4Fe-4S] cluster</name>
        <dbReference type="ChEBI" id="CHEBI:49883"/>
    </ligand>
</feature>
<feature type="binding site" evidence="1">
    <location>
        <begin position="139"/>
        <end position="141"/>
    </location>
    <ligand>
        <name>iminosuccinate</name>
        <dbReference type="ChEBI" id="CHEBI:77875"/>
    </ligand>
</feature>
<feature type="binding site" evidence="1">
    <location>
        <position position="156"/>
    </location>
    <ligand>
        <name>iminosuccinate</name>
        <dbReference type="ChEBI" id="CHEBI:77875"/>
    </ligand>
</feature>
<feature type="binding site" evidence="1">
    <location>
        <position position="200"/>
    </location>
    <ligand>
        <name>[4Fe-4S] cluster</name>
        <dbReference type="ChEBI" id="CHEBI:49883"/>
    </ligand>
</feature>
<feature type="binding site" evidence="1">
    <location>
        <begin position="226"/>
        <end position="228"/>
    </location>
    <ligand>
        <name>iminosuccinate</name>
        <dbReference type="ChEBI" id="CHEBI:77875"/>
    </ligand>
</feature>
<feature type="binding site" evidence="1">
    <location>
        <position position="243"/>
    </location>
    <ligand>
        <name>iminosuccinate</name>
        <dbReference type="ChEBI" id="CHEBI:77875"/>
    </ligand>
</feature>
<feature type="binding site" evidence="1">
    <location>
        <position position="297"/>
    </location>
    <ligand>
        <name>[4Fe-4S] cluster</name>
        <dbReference type="ChEBI" id="CHEBI:49883"/>
    </ligand>
</feature>
<sequence>MSEIFDVNAAIYPFPARPVPLDTNEKAFYREKIKTLLKQRDAVLVAHYYTDPEIQALAEETGGCVADSLEMARFGNNHPASTLLVAGVRFMGETAKILNPEKKVLMPTLNAECSLDLGCPVDEFTAFCDSHPDRTVVVYANTSAAVKAKADWVVTSSIAVELIEHLDSLGEKIIWAPDRHLGSYVQKKSGADVLCWQGACIVHDEFKTQALARMKALYPDAAVLVHPESPQAVVDMADAVGSTSQLIQAAKTLPQKTLIVATDRGIFYKMQQACPDKELFEAPTAGEGATCRSCAHCPWMAMNGLRAIAEGLEQGGVMHKIHVDEELRQQALIPLNRMLDFANQLKLQVKGNA</sequence>
<reference key="1">
    <citation type="submission" date="2008-02" db="EMBL/GenBank/DDBJ databases">
        <title>Complete sequence of Yersinia pseudotuberculosis YPIII.</title>
        <authorList>
            <consortium name="US DOE Joint Genome Institute"/>
            <person name="Copeland A."/>
            <person name="Lucas S."/>
            <person name="Lapidus A."/>
            <person name="Glavina del Rio T."/>
            <person name="Dalin E."/>
            <person name="Tice H."/>
            <person name="Bruce D."/>
            <person name="Goodwin L."/>
            <person name="Pitluck S."/>
            <person name="Munk A.C."/>
            <person name="Brettin T."/>
            <person name="Detter J.C."/>
            <person name="Han C."/>
            <person name="Tapia R."/>
            <person name="Schmutz J."/>
            <person name="Larimer F."/>
            <person name="Land M."/>
            <person name="Hauser L."/>
            <person name="Challacombe J.F."/>
            <person name="Green L."/>
            <person name="Lindler L.E."/>
            <person name="Nikolich M.P."/>
            <person name="Richardson P."/>
        </authorList>
    </citation>
    <scope>NUCLEOTIDE SEQUENCE [LARGE SCALE GENOMIC DNA]</scope>
    <source>
        <strain>YPIII</strain>
    </source>
</reference>
<dbReference type="EC" id="2.5.1.72" evidence="1"/>
<dbReference type="EMBL" id="CP000950">
    <property type="protein sequence ID" value="ACA69227.1"/>
    <property type="molecule type" value="Genomic_DNA"/>
</dbReference>
<dbReference type="RefSeq" id="WP_012304381.1">
    <property type="nucleotide sequence ID" value="NZ_CP009792.1"/>
</dbReference>
<dbReference type="SMR" id="B1JSU6"/>
<dbReference type="KEGG" id="ypy:YPK_2953"/>
<dbReference type="PATRIC" id="fig|502800.11.peg.3674"/>
<dbReference type="UniPathway" id="UPA00253">
    <property type="reaction ID" value="UER00327"/>
</dbReference>
<dbReference type="GO" id="GO:0005829">
    <property type="term" value="C:cytosol"/>
    <property type="evidence" value="ECO:0007669"/>
    <property type="project" value="TreeGrafter"/>
</dbReference>
<dbReference type="GO" id="GO:0051539">
    <property type="term" value="F:4 iron, 4 sulfur cluster binding"/>
    <property type="evidence" value="ECO:0007669"/>
    <property type="project" value="UniProtKB-KW"/>
</dbReference>
<dbReference type="GO" id="GO:0046872">
    <property type="term" value="F:metal ion binding"/>
    <property type="evidence" value="ECO:0007669"/>
    <property type="project" value="UniProtKB-KW"/>
</dbReference>
<dbReference type="GO" id="GO:0008987">
    <property type="term" value="F:quinolinate synthetase A activity"/>
    <property type="evidence" value="ECO:0007669"/>
    <property type="project" value="UniProtKB-UniRule"/>
</dbReference>
<dbReference type="GO" id="GO:0034628">
    <property type="term" value="P:'de novo' NAD biosynthetic process from L-aspartate"/>
    <property type="evidence" value="ECO:0007669"/>
    <property type="project" value="TreeGrafter"/>
</dbReference>
<dbReference type="FunFam" id="3.40.50.10800:FF:000003">
    <property type="entry name" value="Quinolinate synthase A"/>
    <property type="match status" value="1"/>
</dbReference>
<dbReference type="Gene3D" id="3.40.50.10800">
    <property type="entry name" value="NadA-like"/>
    <property type="match status" value="3"/>
</dbReference>
<dbReference type="HAMAP" id="MF_00567">
    <property type="entry name" value="NadA_type1"/>
    <property type="match status" value="1"/>
</dbReference>
<dbReference type="InterPro" id="IPR003473">
    <property type="entry name" value="NadA"/>
</dbReference>
<dbReference type="InterPro" id="IPR036094">
    <property type="entry name" value="NadA_sf"/>
</dbReference>
<dbReference type="InterPro" id="IPR023513">
    <property type="entry name" value="Quinolinate_synth_A_type1"/>
</dbReference>
<dbReference type="NCBIfam" id="TIGR00550">
    <property type="entry name" value="nadA"/>
    <property type="match status" value="1"/>
</dbReference>
<dbReference type="NCBIfam" id="NF006877">
    <property type="entry name" value="PRK09375.1-1"/>
    <property type="match status" value="1"/>
</dbReference>
<dbReference type="NCBIfam" id="NF006878">
    <property type="entry name" value="PRK09375.1-2"/>
    <property type="match status" value="1"/>
</dbReference>
<dbReference type="PANTHER" id="PTHR30573:SF0">
    <property type="entry name" value="QUINOLINATE SYNTHASE, CHLOROPLASTIC"/>
    <property type="match status" value="1"/>
</dbReference>
<dbReference type="PANTHER" id="PTHR30573">
    <property type="entry name" value="QUINOLINATE SYNTHETASE A"/>
    <property type="match status" value="1"/>
</dbReference>
<dbReference type="Pfam" id="PF02445">
    <property type="entry name" value="NadA"/>
    <property type="match status" value="1"/>
</dbReference>
<dbReference type="SUPFAM" id="SSF142754">
    <property type="entry name" value="NadA-like"/>
    <property type="match status" value="1"/>
</dbReference>